<proteinExistence type="inferred from homology"/>
<name>LEUC_SHIB3</name>
<evidence type="ECO:0000255" key="1">
    <source>
        <dbReference type="HAMAP-Rule" id="MF_01026"/>
    </source>
</evidence>
<sequence length="466" mass="49882">MAKTLYEKLFDAHVVYEAENETPLLYIDRHLVHEVTSPQAFDGLRAHGRPVRQPGKTFATMDHNVSTQTKDINACGEMARIQMQELIKNCKEFGVELYDLNHPYQGIVHVMGPEQGVTLPGMTIVCGDSHTATHGAFGALAFGIGTSEVEHVLATQTLKQGRAKTMKIEVQGKAAPGITAKDIVLAIIGKTGSAGGTGHVVEFCGEAIRDLSMEGRMTLCNMAIEMGAKAGLVAPDETTFNYVKGRLHAPKGKDFDDAVAYWKTLQTDEGATFDTVVTLQAEEISPQVTWGTNPGQVISVNDNIPDPASFADPVERASAEKALAYMGLKPGIPLTEVAIDKVFIGSCTNSRIEDLRAAAEIAKGRKVAPGVQALVVPGSGPVKAQAEAEGLDKIFIEAGFEWRLPGCSMCLAMNNDRLNPGERCASTSNRNFEGRQGRGGRTHLVSPAMAAAAAVTGHFADIRNIK</sequence>
<feature type="chain" id="PRO_1000135716" description="3-isopropylmalate dehydratase large subunit">
    <location>
        <begin position="1"/>
        <end position="466"/>
    </location>
</feature>
<feature type="binding site" evidence="1">
    <location>
        <position position="347"/>
    </location>
    <ligand>
        <name>[4Fe-4S] cluster</name>
        <dbReference type="ChEBI" id="CHEBI:49883"/>
    </ligand>
</feature>
<feature type="binding site" evidence="1">
    <location>
        <position position="407"/>
    </location>
    <ligand>
        <name>[4Fe-4S] cluster</name>
        <dbReference type="ChEBI" id="CHEBI:49883"/>
    </ligand>
</feature>
<feature type="binding site" evidence="1">
    <location>
        <position position="410"/>
    </location>
    <ligand>
        <name>[4Fe-4S] cluster</name>
        <dbReference type="ChEBI" id="CHEBI:49883"/>
    </ligand>
</feature>
<dbReference type="EC" id="4.2.1.33" evidence="1"/>
<dbReference type="EMBL" id="CP001063">
    <property type="protein sequence ID" value="ACD06297.1"/>
    <property type="molecule type" value="Genomic_DNA"/>
</dbReference>
<dbReference type="RefSeq" id="WP_001140652.1">
    <property type="nucleotide sequence ID" value="NC_010658.1"/>
</dbReference>
<dbReference type="SMR" id="B2U279"/>
<dbReference type="STRING" id="344609.SbBS512_E0066"/>
<dbReference type="GeneID" id="75202111"/>
<dbReference type="KEGG" id="sbc:SbBS512_E0066"/>
<dbReference type="HOGENOM" id="CLU_006714_3_4_6"/>
<dbReference type="UniPathway" id="UPA00048">
    <property type="reaction ID" value="UER00071"/>
</dbReference>
<dbReference type="Proteomes" id="UP000001030">
    <property type="component" value="Chromosome"/>
</dbReference>
<dbReference type="GO" id="GO:0003861">
    <property type="term" value="F:3-isopropylmalate dehydratase activity"/>
    <property type="evidence" value="ECO:0007669"/>
    <property type="project" value="UniProtKB-UniRule"/>
</dbReference>
<dbReference type="GO" id="GO:0051539">
    <property type="term" value="F:4 iron, 4 sulfur cluster binding"/>
    <property type="evidence" value="ECO:0007669"/>
    <property type="project" value="UniProtKB-KW"/>
</dbReference>
<dbReference type="GO" id="GO:0046872">
    <property type="term" value="F:metal ion binding"/>
    <property type="evidence" value="ECO:0007669"/>
    <property type="project" value="UniProtKB-KW"/>
</dbReference>
<dbReference type="GO" id="GO:0009098">
    <property type="term" value="P:L-leucine biosynthetic process"/>
    <property type="evidence" value="ECO:0007669"/>
    <property type="project" value="UniProtKB-UniRule"/>
</dbReference>
<dbReference type="CDD" id="cd01583">
    <property type="entry name" value="IPMI"/>
    <property type="match status" value="1"/>
</dbReference>
<dbReference type="FunFam" id="3.30.499.10:FF:000006">
    <property type="entry name" value="3-isopropylmalate dehydratase large subunit"/>
    <property type="match status" value="1"/>
</dbReference>
<dbReference type="FunFam" id="3.30.499.10:FF:000007">
    <property type="entry name" value="3-isopropylmalate dehydratase large subunit"/>
    <property type="match status" value="1"/>
</dbReference>
<dbReference type="Gene3D" id="3.30.499.10">
    <property type="entry name" value="Aconitase, domain 3"/>
    <property type="match status" value="2"/>
</dbReference>
<dbReference type="HAMAP" id="MF_01026">
    <property type="entry name" value="LeuC_type1"/>
    <property type="match status" value="1"/>
</dbReference>
<dbReference type="InterPro" id="IPR004430">
    <property type="entry name" value="3-IsopropMal_deHydase_lsu"/>
</dbReference>
<dbReference type="InterPro" id="IPR015931">
    <property type="entry name" value="Acnase/IPM_dHydase_lsu_aba_1/3"/>
</dbReference>
<dbReference type="InterPro" id="IPR001030">
    <property type="entry name" value="Acoase/IPM_deHydtase_lsu_aba"/>
</dbReference>
<dbReference type="InterPro" id="IPR018136">
    <property type="entry name" value="Aconitase_4Fe-4S_BS"/>
</dbReference>
<dbReference type="InterPro" id="IPR036008">
    <property type="entry name" value="Aconitase_4Fe-4S_dom"/>
</dbReference>
<dbReference type="InterPro" id="IPR050067">
    <property type="entry name" value="IPM_dehydratase_rel_enz"/>
</dbReference>
<dbReference type="InterPro" id="IPR033941">
    <property type="entry name" value="IPMI_cat"/>
</dbReference>
<dbReference type="NCBIfam" id="TIGR00170">
    <property type="entry name" value="leuC"/>
    <property type="match status" value="1"/>
</dbReference>
<dbReference type="NCBIfam" id="NF004016">
    <property type="entry name" value="PRK05478.1"/>
    <property type="match status" value="1"/>
</dbReference>
<dbReference type="NCBIfam" id="NF009116">
    <property type="entry name" value="PRK12466.1"/>
    <property type="match status" value="1"/>
</dbReference>
<dbReference type="PANTHER" id="PTHR43822:SF9">
    <property type="entry name" value="3-ISOPROPYLMALATE DEHYDRATASE"/>
    <property type="match status" value="1"/>
</dbReference>
<dbReference type="PANTHER" id="PTHR43822">
    <property type="entry name" value="HOMOACONITASE, MITOCHONDRIAL-RELATED"/>
    <property type="match status" value="1"/>
</dbReference>
<dbReference type="Pfam" id="PF00330">
    <property type="entry name" value="Aconitase"/>
    <property type="match status" value="1"/>
</dbReference>
<dbReference type="PRINTS" id="PR00415">
    <property type="entry name" value="ACONITASE"/>
</dbReference>
<dbReference type="SUPFAM" id="SSF53732">
    <property type="entry name" value="Aconitase iron-sulfur domain"/>
    <property type="match status" value="1"/>
</dbReference>
<dbReference type="PROSITE" id="PS00450">
    <property type="entry name" value="ACONITASE_1"/>
    <property type="match status" value="1"/>
</dbReference>
<dbReference type="PROSITE" id="PS01244">
    <property type="entry name" value="ACONITASE_2"/>
    <property type="match status" value="1"/>
</dbReference>
<comment type="function">
    <text evidence="1">Catalyzes the isomerization between 2-isopropylmalate and 3-isopropylmalate, via the formation of 2-isopropylmaleate.</text>
</comment>
<comment type="catalytic activity">
    <reaction evidence="1">
        <text>(2R,3S)-3-isopropylmalate = (2S)-2-isopropylmalate</text>
        <dbReference type="Rhea" id="RHEA:32287"/>
        <dbReference type="ChEBI" id="CHEBI:1178"/>
        <dbReference type="ChEBI" id="CHEBI:35121"/>
        <dbReference type="EC" id="4.2.1.33"/>
    </reaction>
</comment>
<comment type="cofactor">
    <cofactor evidence="1">
        <name>[4Fe-4S] cluster</name>
        <dbReference type="ChEBI" id="CHEBI:49883"/>
    </cofactor>
    <text evidence="1">Binds 1 [4Fe-4S] cluster per subunit.</text>
</comment>
<comment type="pathway">
    <text evidence="1">Amino-acid biosynthesis; L-leucine biosynthesis; L-leucine from 3-methyl-2-oxobutanoate: step 2/4.</text>
</comment>
<comment type="subunit">
    <text evidence="1">Heterodimer of LeuC and LeuD.</text>
</comment>
<comment type="similarity">
    <text evidence="1">Belongs to the aconitase/IPM isomerase family. LeuC type 1 subfamily.</text>
</comment>
<keyword id="KW-0004">4Fe-4S</keyword>
<keyword id="KW-0028">Amino-acid biosynthesis</keyword>
<keyword id="KW-0100">Branched-chain amino acid biosynthesis</keyword>
<keyword id="KW-0408">Iron</keyword>
<keyword id="KW-0411">Iron-sulfur</keyword>
<keyword id="KW-0432">Leucine biosynthesis</keyword>
<keyword id="KW-0456">Lyase</keyword>
<keyword id="KW-0479">Metal-binding</keyword>
<keyword id="KW-1185">Reference proteome</keyword>
<organism>
    <name type="scientific">Shigella boydii serotype 18 (strain CDC 3083-94 / BS512)</name>
    <dbReference type="NCBI Taxonomy" id="344609"/>
    <lineage>
        <taxon>Bacteria</taxon>
        <taxon>Pseudomonadati</taxon>
        <taxon>Pseudomonadota</taxon>
        <taxon>Gammaproteobacteria</taxon>
        <taxon>Enterobacterales</taxon>
        <taxon>Enterobacteriaceae</taxon>
        <taxon>Shigella</taxon>
    </lineage>
</organism>
<reference key="1">
    <citation type="submission" date="2008-05" db="EMBL/GenBank/DDBJ databases">
        <title>Complete sequence of Shigella boydii serotype 18 strain BS512.</title>
        <authorList>
            <person name="Rasko D.A."/>
            <person name="Rosovitz M."/>
            <person name="Maurelli A.T."/>
            <person name="Myers G."/>
            <person name="Seshadri R."/>
            <person name="Cer R."/>
            <person name="Jiang L."/>
            <person name="Ravel J."/>
            <person name="Sebastian Y."/>
        </authorList>
    </citation>
    <scope>NUCLEOTIDE SEQUENCE [LARGE SCALE GENOMIC DNA]</scope>
    <source>
        <strain>CDC 3083-94 / BS512</strain>
    </source>
</reference>
<protein>
    <recommendedName>
        <fullName evidence="1">3-isopropylmalate dehydratase large subunit</fullName>
        <ecNumber evidence="1">4.2.1.33</ecNumber>
    </recommendedName>
    <alternativeName>
        <fullName evidence="1">Alpha-IPM isomerase</fullName>
        <shortName evidence="1">IPMI</shortName>
    </alternativeName>
    <alternativeName>
        <fullName evidence="1">Isopropylmalate isomerase</fullName>
    </alternativeName>
</protein>
<accession>B2U279</accession>
<gene>
    <name evidence="1" type="primary">leuC</name>
    <name type="ordered locus">SbBS512_E0066</name>
</gene>